<keyword id="KW-0342">GTP-binding</keyword>
<keyword id="KW-0396">Initiation factor</keyword>
<keyword id="KW-0547">Nucleotide-binding</keyword>
<keyword id="KW-0597">Phosphoprotein</keyword>
<keyword id="KW-0648">Protein biosynthesis</keyword>
<keyword id="KW-1185">Reference proteome</keyword>
<protein>
    <recommendedName>
        <fullName>Probable eukaryotic translation initiation factor 5-2</fullName>
        <shortName>eIF-5 2</shortName>
    </recommendedName>
</protein>
<evidence type="ECO:0000250" key="1"/>
<evidence type="ECO:0000255" key="2"/>
<evidence type="ECO:0000255" key="3">
    <source>
        <dbReference type="PROSITE-ProRule" id="PRU00695"/>
    </source>
</evidence>
<evidence type="ECO:0000256" key="4">
    <source>
        <dbReference type="SAM" id="MobiDB-lite"/>
    </source>
</evidence>
<evidence type="ECO:0000269" key="5">
    <source>
    </source>
</evidence>
<evidence type="ECO:0000305" key="6"/>
<dbReference type="EMBL" id="AC009243">
    <property type="protein sequence ID" value="AAF17676.1"/>
    <property type="molecule type" value="Genomic_DNA"/>
</dbReference>
<dbReference type="EMBL" id="AC012193">
    <property type="protein sequence ID" value="AAG51628.1"/>
    <property type="molecule type" value="Genomic_DNA"/>
</dbReference>
<dbReference type="EMBL" id="CP002684">
    <property type="protein sequence ID" value="AEE36033.1"/>
    <property type="molecule type" value="Genomic_DNA"/>
</dbReference>
<dbReference type="EMBL" id="AY062694">
    <property type="protein sequence ID" value="AAL32772.1"/>
    <property type="molecule type" value="mRNA"/>
</dbReference>
<dbReference type="EMBL" id="AY065097">
    <property type="protein sequence ID" value="AAL38273.1"/>
    <property type="molecule type" value="mRNA"/>
</dbReference>
<dbReference type="EMBL" id="AY114664">
    <property type="protein sequence ID" value="AAM47983.1"/>
    <property type="molecule type" value="mRNA"/>
</dbReference>
<dbReference type="EMBL" id="BT002163">
    <property type="protein sequence ID" value="AAN72174.1"/>
    <property type="molecule type" value="mRNA"/>
</dbReference>
<dbReference type="RefSeq" id="NP_177907.1">
    <property type="nucleotide sequence ID" value="NM_106433.4"/>
</dbReference>
<dbReference type="SMR" id="Q9S825"/>
<dbReference type="FunCoup" id="Q9S825">
    <property type="interactions" value="4729"/>
</dbReference>
<dbReference type="STRING" id="3702.Q9S825"/>
<dbReference type="iPTMnet" id="Q9S825"/>
<dbReference type="PaxDb" id="3702-AT1G77840.1"/>
<dbReference type="ProteomicsDB" id="232278"/>
<dbReference type="DNASU" id="844119"/>
<dbReference type="EnsemblPlants" id="AT1G77840.1">
    <property type="protein sequence ID" value="AT1G77840.1"/>
    <property type="gene ID" value="AT1G77840"/>
</dbReference>
<dbReference type="GeneID" id="844119"/>
<dbReference type="Gramene" id="AT1G77840.1">
    <property type="protein sequence ID" value="AT1G77840.1"/>
    <property type="gene ID" value="AT1G77840"/>
</dbReference>
<dbReference type="KEGG" id="ath:AT1G77840"/>
<dbReference type="Araport" id="AT1G77840"/>
<dbReference type="TAIR" id="AT1G77840"/>
<dbReference type="eggNOG" id="KOG2767">
    <property type="taxonomic scope" value="Eukaryota"/>
</dbReference>
<dbReference type="HOGENOM" id="CLU_026663_1_1_1"/>
<dbReference type="InParanoid" id="Q9S825"/>
<dbReference type="OMA" id="YRYKMEK"/>
<dbReference type="OrthoDB" id="10250831at2759"/>
<dbReference type="PhylomeDB" id="Q9S825"/>
<dbReference type="CD-CODE" id="4299E36E">
    <property type="entry name" value="Nucleolus"/>
</dbReference>
<dbReference type="PRO" id="PR:Q9S825"/>
<dbReference type="Proteomes" id="UP000006548">
    <property type="component" value="Chromosome 1"/>
</dbReference>
<dbReference type="ExpressionAtlas" id="Q9S825">
    <property type="expression patterns" value="baseline and differential"/>
</dbReference>
<dbReference type="GO" id="GO:0005737">
    <property type="term" value="C:cytoplasm"/>
    <property type="evidence" value="ECO:0007005"/>
    <property type="project" value="TAIR"/>
</dbReference>
<dbReference type="GO" id="GO:0005634">
    <property type="term" value="C:nucleus"/>
    <property type="evidence" value="ECO:0007005"/>
    <property type="project" value="TAIR"/>
</dbReference>
<dbReference type="GO" id="GO:0005525">
    <property type="term" value="F:GTP binding"/>
    <property type="evidence" value="ECO:0007669"/>
    <property type="project" value="UniProtKB-KW"/>
</dbReference>
<dbReference type="GO" id="GO:0003743">
    <property type="term" value="F:translation initiation factor activity"/>
    <property type="evidence" value="ECO:0007669"/>
    <property type="project" value="UniProtKB-KW"/>
</dbReference>
<dbReference type="CDD" id="cd11561">
    <property type="entry name" value="W2_eIF5"/>
    <property type="match status" value="1"/>
</dbReference>
<dbReference type="FunFam" id="2.20.25.350:FF:000001">
    <property type="entry name" value="Eukaryotic translation initiation factor 5"/>
    <property type="match status" value="1"/>
</dbReference>
<dbReference type="FunFam" id="3.30.30.170:FF:000002">
    <property type="entry name" value="Eukaryotic translation initiation factor 5"/>
    <property type="match status" value="1"/>
</dbReference>
<dbReference type="Gene3D" id="1.25.40.180">
    <property type="match status" value="1"/>
</dbReference>
<dbReference type="Gene3D" id="2.20.25.350">
    <property type="match status" value="1"/>
</dbReference>
<dbReference type="Gene3D" id="3.30.30.170">
    <property type="match status" value="1"/>
</dbReference>
<dbReference type="InterPro" id="IPR016024">
    <property type="entry name" value="ARM-type_fold"/>
</dbReference>
<dbReference type="InterPro" id="IPR045196">
    <property type="entry name" value="IF2/IF5"/>
</dbReference>
<dbReference type="InterPro" id="IPR002735">
    <property type="entry name" value="Transl_init_fac_IF2/IF5_dom"/>
</dbReference>
<dbReference type="InterPro" id="IPR016189">
    <property type="entry name" value="Transl_init_fac_IF2/IF5_N"/>
</dbReference>
<dbReference type="InterPro" id="IPR016190">
    <property type="entry name" value="Transl_init_fac_IF2/IF5_Zn-bd"/>
</dbReference>
<dbReference type="InterPro" id="IPR003307">
    <property type="entry name" value="W2_domain"/>
</dbReference>
<dbReference type="PANTHER" id="PTHR23001">
    <property type="entry name" value="EUKARYOTIC TRANSLATION INITIATION FACTOR"/>
    <property type="match status" value="1"/>
</dbReference>
<dbReference type="PANTHER" id="PTHR23001:SF28">
    <property type="entry name" value="EUKARYOTIC TRANSLATION INITIATION FACTOR 5-2-RELATED"/>
    <property type="match status" value="1"/>
</dbReference>
<dbReference type="Pfam" id="PF01873">
    <property type="entry name" value="eIF-5_eIF-2B"/>
    <property type="match status" value="1"/>
</dbReference>
<dbReference type="Pfam" id="PF02020">
    <property type="entry name" value="W2"/>
    <property type="match status" value="1"/>
</dbReference>
<dbReference type="SMART" id="SM00653">
    <property type="entry name" value="eIF2B_5"/>
    <property type="match status" value="1"/>
</dbReference>
<dbReference type="SMART" id="SM00515">
    <property type="entry name" value="eIF5C"/>
    <property type="match status" value="1"/>
</dbReference>
<dbReference type="SUPFAM" id="SSF48371">
    <property type="entry name" value="ARM repeat"/>
    <property type="match status" value="1"/>
</dbReference>
<dbReference type="SUPFAM" id="SSF100966">
    <property type="entry name" value="Translation initiation factor 2 beta, aIF2beta, N-terminal domain"/>
    <property type="match status" value="1"/>
</dbReference>
<dbReference type="SUPFAM" id="SSF75689">
    <property type="entry name" value="Zinc-binding domain of translation initiation factor 2 beta"/>
    <property type="match status" value="1"/>
</dbReference>
<dbReference type="PROSITE" id="PS51363">
    <property type="entry name" value="W2"/>
    <property type="match status" value="1"/>
</dbReference>
<name>IF5Z_ARATH</name>
<sequence length="437" mass="48640">MALQNIGASNRNDAFYRYKMPKMVTKTEGKGNGIKTNIINNVEIAKALARPPSYTTKYFGCELGAQSKFDEKTGTSLVNGAHNTSKLAGLLENFIKKFVQCYGCGNPETEIIITKTQMVNLKCAACGFISEVDMRDKLTNFILKNPPEQKKVSKDKKAMRKAEKERLKEGELADEEQRKLKAKKKALSNGKDSKTSKNHSSDEDISPKHDENALEVDEDEDDDDGVEWQTDTSREAAEKRMMEQLSAKTAEMVMLSAMEVEEKKAPKSKSNGNVVKTENPPPQEKNLVQDMKEYLKKGSPISALKSFISSLSEPPQDIMDALFNALFDGVGKGFAKEVTKKKNYLAAAATMQEDGSQMHLLNSIGTFCGKNGNEEALKEVALVLKALYDQDIIEEEVVLDWYEKGLTGADKSSPVWKNVKPFVEWLQSAESESEEED</sequence>
<comment type="function">
    <text evidence="1">Catalyzes the hydrolysis of GTP bound to the 40S ribosomal initiation complex (40S.mRNA.Met-tRNA[F].eIF-2.GTP) with the subsequent joining of a 60S ribosomal subunit resulting in the release of eIF-2 and the guanine nucleotide. The subsequent joining of a 60S ribosomal subunit results in the formation of a functional 80S initiation complex (80S.mRNA.Met-tRNA[F]) (By similarity).</text>
</comment>
<comment type="PTM">
    <text evidence="5">Phosphorylated at Ser-201, Thr-230, Ser-428, Ser-431, and Ser-433 by CK2.</text>
</comment>
<comment type="similarity">
    <text evidence="6">Belongs to the eIF-2-beta/eIF-5 family.</text>
</comment>
<reference key="1">
    <citation type="journal article" date="2000" name="Nature">
        <title>Sequence and analysis of chromosome 1 of the plant Arabidopsis thaliana.</title>
        <authorList>
            <person name="Theologis A."/>
            <person name="Ecker J.R."/>
            <person name="Palm C.J."/>
            <person name="Federspiel N.A."/>
            <person name="Kaul S."/>
            <person name="White O."/>
            <person name="Alonso J."/>
            <person name="Altafi H."/>
            <person name="Araujo R."/>
            <person name="Bowman C.L."/>
            <person name="Brooks S.Y."/>
            <person name="Buehler E."/>
            <person name="Chan A."/>
            <person name="Chao Q."/>
            <person name="Chen H."/>
            <person name="Cheuk R.F."/>
            <person name="Chin C.W."/>
            <person name="Chung M.K."/>
            <person name="Conn L."/>
            <person name="Conway A.B."/>
            <person name="Conway A.R."/>
            <person name="Creasy T.H."/>
            <person name="Dewar K."/>
            <person name="Dunn P."/>
            <person name="Etgu P."/>
            <person name="Feldblyum T.V."/>
            <person name="Feng J.-D."/>
            <person name="Fong B."/>
            <person name="Fujii C.Y."/>
            <person name="Gill J.E."/>
            <person name="Goldsmith A.D."/>
            <person name="Haas B."/>
            <person name="Hansen N.F."/>
            <person name="Hughes B."/>
            <person name="Huizar L."/>
            <person name="Hunter J.L."/>
            <person name="Jenkins J."/>
            <person name="Johnson-Hopson C."/>
            <person name="Khan S."/>
            <person name="Khaykin E."/>
            <person name="Kim C.J."/>
            <person name="Koo H.L."/>
            <person name="Kremenetskaia I."/>
            <person name="Kurtz D.B."/>
            <person name="Kwan A."/>
            <person name="Lam B."/>
            <person name="Langin-Hooper S."/>
            <person name="Lee A."/>
            <person name="Lee J.M."/>
            <person name="Lenz C.A."/>
            <person name="Li J.H."/>
            <person name="Li Y.-P."/>
            <person name="Lin X."/>
            <person name="Liu S.X."/>
            <person name="Liu Z.A."/>
            <person name="Luros J.S."/>
            <person name="Maiti R."/>
            <person name="Marziali A."/>
            <person name="Militscher J."/>
            <person name="Miranda M."/>
            <person name="Nguyen M."/>
            <person name="Nierman W.C."/>
            <person name="Osborne B.I."/>
            <person name="Pai G."/>
            <person name="Peterson J."/>
            <person name="Pham P.K."/>
            <person name="Rizzo M."/>
            <person name="Rooney T."/>
            <person name="Rowley D."/>
            <person name="Sakano H."/>
            <person name="Salzberg S.L."/>
            <person name="Schwartz J.R."/>
            <person name="Shinn P."/>
            <person name="Southwick A.M."/>
            <person name="Sun H."/>
            <person name="Tallon L.J."/>
            <person name="Tambunga G."/>
            <person name="Toriumi M.J."/>
            <person name="Town C.D."/>
            <person name="Utterback T."/>
            <person name="Van Aken S."/>
            <person name="Vaysberg M."/>
            <person name="Vysotskaia V.S."/>
            <person name="Walker M."/>
            <person name="Wu D."/>
            <person name="Yu G."/>
            <person name="Fraser C.M."/>
            <person name="Venter J.C."/>
            <person name="Davis R.W."/>
        </authorList>
    </citation>
    <scope>NUCLEOTIDE SEQUENCE [LARGE SCALE GENOMIC DNA]</scope>
    <source>
        <strain>cv. Columbia</strain>
    </source>
</reference>
<reference key="2">
    <citation type="journal article" date="2017" name="Plant J.">
        <title>Araport11: a complete reannotation of the Arabidopsis thaliana reference genome.</title>
        <authorList>
            <person name="Cheng C.Y."/>
            <person name="Krishnakumar V."/>
            <person name="Chan A.P."/>
            <person name="Thibaud-Nissen F."/>
            <person name="Schobel S."/>
            <person name="Town C.D."/>
        </authorList>
    </citation>
    <scope>GENOME REANNOTATION</scope>
    <source>
        <strain>cv. Columbia</strain>
    </source>
</reference>
<reference key="3">
    <citation type="journal article" date="2003" name="Science">
        <title>Empirical analysis of transcriptional activity in the Arabidopsis genome.</title>
        <authorList>
            <person name="Yamada K."/>
            <person name="Lim J."/>
            <person name="Dale J.M."/>
            <person name="Chen H."/>
            <person name="Shinn P."/>
            <person name="Palm C.J."/>
            <person name="Southwick A.M."/>
            <person name="Wu H.C."/>
            <person name="Kim C.J."/>
            <person name="Nguyen M."/>
            <person name="Pham P.K."/>
            <person name="Cheuk R.F."/>
            <person name="Karlin-Newmann G."/>
            <person name="Liu S.X."/>
            <person name="Lam B."/>
            <person name="Sakano H."/>
            <person name="Wu T."/>
            <person name="Yu G."/>
            <person name="Miranda M."/>
            <person name="Quach H.L."/>
            <person name="Tripp M."/>
            <person name="Chang C.H."/>
            <person name="Lee J.M."/>
            <person name="Toriumi M.J."/>
            <person name="Chan M.M."/>
            <person name="Tang C.C."/>
            <person name="Onodera C.S."/>
            <person name="Deng J.M."/>
            <person name="Akiyama K."/>
            <person name="Ansari Y."/>
            <person name="Arakawa T."/>
            <person name="Banh J."/>
            <person name="Banno F."/>
            <person name="Bowser L."/>
            <person name="Brooks S.Y."/>
            <person name="Carninci P."/>
            <person name="Chao Q."/>
            <person name="Choy N."/>
            <person name="Enju A."/>
            <person name="Goldsmith A.D."/>
            <person name="Gurjal M."/>
            <person name="Hansen N.F."/>
            <person name="Hayashizaki Y."/>
            <person name="Johnson-Hopson C."/>
            <person name="Hsuan V.W."/>
            <person name="Iida K."/>
            <person name="Karnes M."/>
            <person name="Khan S."/>
            <person name="Koesema E."/>
            <person name="Ishida J."/>
            <person name="Jiang P.X."/>
            <person name="Jones T."/>
            <person name="Kawai J."/>
            <person name="Kamiya A."/>
            <person name="Meyers C."/>
            <person name="Nakajima M."/>
            <person name="Narusaka M."/>
            <person name="Seki M."/>
            <person name="Sakurai T."/>
            <person name="Satou M."/>
            <person name="Tamse R."/>
            <person name="Vaysberg M."/>
            <person name="Wallender E.K."/>
            <person name="Wong C."/>
            <person name="Yamamura Y."/>
            <person name="Yuan S."/>
            <person name="Shinozaki K."/>
            <person name="Davis R.W."/>
            <person name="Theologis A."/>
            <person name="Ecker J.R."/>
        </authorList>
    </citation>
    <scope>NUCLEOTIDE SEQUENCE [LARGE SCALE MRNA]</scope>
    <source>
        <strain>cv. Columbia</strain>
    </source>
</reference>
<reference key="4">
    <citation type="journal article" date="2009" name="J. Biol. Chem.">
        <title>Phosphorylation of plant translation initiation factors by CK2 enhances the in vitro interaction of multifactor complex components.</title>
        <authorList>
            <person name="Dennis M.D."/>
            <person name="Person M.D."/>
            <person name="Browning K.S."/>
        </authorList>
    </citation>
    <scope>PHOSPHORYLATION AT SER-201; THR-230; SER-428; SER-431 AND SER-433</scope>
</reference>
<feature type="chain" id="PRO_0000212523" description="Probable eukaryotic translation initiation factor 5-2">
    <location>
        <begin position="1"/>
        <end position="437"/>
    </location>
</feature>
<feature type="domain" description="W2" evidence="3">
    <location>
        <begin position="278"/>
        <end position="436"/>
    </location>
</feature>
<feature type="region of interest" description="Disordered" evidence="4">
    <location>
        <begin position="148"/>
        <end position="231"/>
    </location>
</feature>
<feature type="region of interest" description="Disordered" evidence="4">
    <location>
        <begin position="262"/>
        <end position="284"/>
    </location>
</feature>
<feature type="compositionally biased region" description="Basic and acidic residues" evidence="4">
    <location>
        <begin position="148"/>
        <end position="179"/>
    </location>
</feature>
<feature type="compositionally biased region" description="Basic and acidic residues" evidence="4">
    <location>
        <begin position="191"/>
        <end position="212"/>
    </location>
</feature>
<feature type="compositionally biased region" description="Acidic residues" evidence="4">
    <location>
        <begin position="213"/>
        <end position="226"/>
    </location>
</feature>
<feature type="binding site" evidence="2">
    <location>
        <begin position="29"/>
        <end position="36"/>
    </location>
    <ligand>
        <name>GTP</name>
        <dbReference type="ChEBI" id="CHEBI:37565"/>
    </ligand>
</feature>
<feature type="modified residue" description="Phosphoserine; by CK2" evidence="5">
    <location>
        <position position="201"/>
    </location>
</feature>
<feature type="modified residue" description="Phosphothreonine; by CK2" evidence="5">
    <location>
        <position position="230"/>
    </location>
</feature>
<feature type="modified residue" description="Phosphoserine; by CK2" evidence="5">
    <location>
        <position position="428"/>
    </location>
</feature>
<feature type="modified residue" description="Phosphoserine; by CK2" evidence="5">
    <location>
        <position position="431"/>
    </location>
</feature>
<feature type="modified residue" description="Phosphoserine; by CK2" evidence="5">
    <location>
        <position position="433"/>
    </location>
</feature>
<proteinExistence type="evidence at protein level"/>
<accession>Q9S825</accession>
<gene>
    <name type="ordered locus">At1g77840</name>
    <name type="ORF">F28K19.5</name>
    <name type="ORF">T32E8.15</name>
</gene>
<organism>
    <name type="scientific">Arabidopsis thaliana</name>
    <name type="common">Mouse-ear cress</name>
    <dbReference type="NCBI Taxonomy" id="3702"/>
    <lineage>
        <taxon>Eukaryota</taxon>
        <taxon>Viridiplantae</taxon>
        <taxon>Streptophyta</taxon>
        <taxon>Embryophyta</taxon>
        <taxon>Tracheophyta</taxon>
        <taxon>Spermatophyta</taxon>
        <taxon>Magnoliopsida</taxon>
        <taxon>eudicotyledons</taxon>
        <taxon>Gunneridae</taxon>
        <taxon>Pentapetalae</taxon>
        <taxon>rosids</taxon>
        <taxon>malvids</taxon>
        <taxon>Brassicales</taxon>
        <taxon>Brassicaceae</taxon>
        <taxon>Camelineae</taxon>
        <taxon>Arabidopsis</taxon>
    </lineage>
</organism>